<organism>
    <name type="scientific">Methanococcus maripaludis (strain C5 / ATCC BAA-1333)</name>
    <dbReference type="NCBI Taxonomy" id="402880"/>
    <lineage>
        <taxon>Archaea</taxon>
        <taxon>Methanobacteriati</taxon>
        <taxon>Methanobacteriota</taxon>
        <taxon>Methanomada group</taxon>
        <taxon>Methanococci</taxon>
        <taxon>Methanococcales</taxon>
        <taxon>Methanococcaceae</taxon>
        <taxon>Methanococcus</taxon>
    </lineage>
</organism>
<reference key="1">
    <citation type="submission" date="2007-03" db="EMBL/GenBank/DDBJ databases">
        <title>Complete sequence of chromosome of Methanococcus maripaludis C5.</title>
        <authorList>
            <consortium name="US DOE Joint Genome Institute"/>
            <person name="Copeland A."/>
            <person name="Lucas S."/>
            <person name="Lapidus A."/>
            <person name="Barry K."/>
            <person name="Glavina del Rio T."/>
            <person name="Dalin E."/>
            <person name="Tice H."/>
            <person name="Pitluck S."/>
            <person name="Chertkov O."/>
            <person name="Brettin T."/>
            <person name="Bruce D."/>
            <person name="Han C."/>
            <person name="Detter J.C."/>
            <person name="Schmutz J."/>
            <person name="Larimer F."/>
            <person name="Land M."/>
            <person name="Hauser L."/>
            <person name="Kyrpides N."/>
            <person name="Mikhailova N."/>
            <person name="Sieprawska-Lupa M."/>
            <person name="Whitman W.B."/>
            <person name="Richardson P."/>
        </authorList>
    </citation>
    <scope>NUCLEOTIDE SEQUENCE [LARGE SCALE GENOMIC DNA]</scope>
    <source>
        <strain>C5 / ATCC BAA-1333</strain>
    </source>
</reference>
<keyword id="KW-0066">ATP synthesis</keyword>
<keyword id="KW-0067">ATP-binding</keyword>
<keyword id="KW-1003">Cell membrane</keyword>
<keyword id="KW-0375">Hydrogen ion transport</keyword>
<keyword id="KW-0406">Ion transport</keyword>
<keyword id="KW-0472">Membrane</keyword>
<keyword id="KW-0547">Nucleotide-binding</keyword>
<keyword id="KW-1278">Translocase</keyword>
<keyword id="KW-0813">Transport</keyword>
<feature type="chain" id="PRO_0000322474" description="A-type ATP synthase subunit A">
    <location>
        <begin position="1"/>
        <end position="586"/>
    </location>
</feature>
<feature type="binding site" evidence="1">
    <location>
        <begin position="232"/>
        <end position="239"/>
    </location>
    <ligand>
        <name>ATP</name>
        <dbReference type="ChEBI" id="CHEBI:30616"/>
    </ligand>
</feature>
<evidence type="ECO:0000255" key="1">
    <source>
        <dbReference type="HAMAP-Rule" id="MF_00309"/>
    </source>
</evidence>
<sequence>MVVGKIIKISGPVVVAEGMKGSQMFEVVKVGNEGLTGEIIQLTEDEAIIQVYEETAGIKPGEGVEGTGAPLSVELGPGMLKAMYDGIQRPLNEIENATDSIYIPRGVSVPSISRDIKWDFEATAAVGDEVITGDVIGTVQETASIVHKIMIPLGISGKIKEIKSGSFTVEETVAVVETAEGEKEVQMMQKWPVRKPRPSKGKQPPVIPLITGQRVEDTFFGVAKGGAAAIPGPFGSGKTVTQHQLAKWSDVDVVVYIGCGERGNEMTEVIEEFPHLDDIKTGNKLMDRTVLIANTSNMPVAAREASVYTGITIAEYFRDQGLGVLLTADSTSRWAEAMREISGRLEEMPGEEGYPAYLSSKLAQFYERAGRVQCLGSEDKHGFVCIVGAVSPPGGDFSEPVTSNTLRIVKVFWALDANLARRRHFPAINWLTSYSLYIDDIAGWWQENTAADWRSLRDEAMTLLQKEAELQEIVQLVGPDALPDRERVILEIARMLREDFLQQDAYHEVDSYCSPLKQYNMLKIIMTYYTKALDAVAKGADPAGISAVTVKGDIARMKYLTDDEFINTKVPEIINKMESELGALIK</sequence>
<gene>
    <name evidence="1" type="primary">atpA</name>
    <name type="ordered locus">MmarC5_0549</name>
</gene>
<protein>
    <recommendedName>
        <fullName evidence="1">A-type ATP synthase subunit A</fullName>
        <ecNumber evidence="1">7.1.2.2</ecNumber>
    </recommendedName>
</protein>
<name>AATA_METM5</name>
<proteinExistence type="inferred from homology"/>
<comment type="function">
    <text evidence="1">Component of the A-type ATP synthase that produces ATP from ADP in the presence of a proton gradient across the membrane. The A chain is the catalytic subunit.</text>
</comment>
<comment type="catalytic activity">
    <reaction evidence="1">
        <text>ATP + H2O + 4 H(+)(in) = ADP + phosphate + 5 H(+)(out)</text>
        <dbReference type="Rhea" id="RHEA:57720"/>
        <dbReference type="ChEBI" id="CHEBI:15377"/>
        <dbReference type="ChEBI" id="CHEBI:15378"/>
        <dbReference type="ChEBI" id="CHEBI:30616"/>
        <dbReference type="ChEBI" id="CHEBI:43474"/>
        <dbReference type="ChEBI" id="CHEBI:456216"/>
        <dbReference type="EC" id="7.1.2.2"/>
    </reaction>
</comment>
<comment type="subunit">
    <text evidence="1">Has multiple subunits with at least A(3), B(3), C, D, E, F, H, I and proteolipid K(x).</text>
</comment>
<comment type="subcellular location">
    <subcellularLocation>
        <location evidence="1">Cell membrane</location>
        <topology evidence="1">Peripheral membrane protein</topology>
    </subcellularLocation>
</comment>
<comment type="similarity">
    <text evidence="1">Belongs to the ATPase alpha/beta chains family.</text>
</comment>
<dbReference type="EC" id="7.1.2.2" evidence="1"/>
<dbReference type="EMBL" id="CP000609">
    <property type="protein sequence ID" value="ABO34863.1"/>
    <property type="molecule type" value="Genomic_DNA"/>
</dbReference>
<dbReference type="RefSeq" id="WP_011868318.1">
    <property type="nucleotide sequence ID" value="NC_009135.1"/>
</dbReference>
<dbReference type="SMR" id="A4FXD4"/>
<dbReference type="STRING" id="402880.MmarC5_0549"/>
<dbReference type="GeneID" id="4929283"/>
<dbReference type="KEGG" id="mmq:MmarC5_0549"/>
<dbReference type="eggNOG" id="arCOG00868">
    <property type="taxonomic scope" value="Archaea"/>
</dbReference>
<dbReference type="HOGENOM" id="CLU_008162_3_1_2"/>
<dbReference type="OrthoDB" id="115235at2157"/>
<dbReference type="Proteomes" id="UP000000253">
    <property type="component" value="Chromosome"/>
</dbReference>
<dbReference type="GO" id="GO:0005886">
    <property type="term" value="C:plasma membrane"/>
    <property type="evidence" value="ECO:0007669"/>
    <property type="project" value="UniProtKB-SubCell"/>
</dbReference>
<dbReference type="GO" id="GO:0033178">
    <property type="term" value="C:proton-transporting two-sector ATPase complex, catalytic domain"/>
    <property type="evidence" value="ECO:0007669"/>
    <property type="project" value="InterPro"/>
</dbReference>
<dbReference type="GO" id="GO:0005524">
    <property type="term" value="F:ATP binding"/>
    <property type="evidence" value="ECO:0007669"/>
    <property type="project" value="UniProtKB-UniRule"/>
</dbReference>
<dbReference type="GO" id="GO:0046933">
    <property type="term" value="F:proton-transporting ATP synthase activity, rotational mechanism"/>
    <property type="evidence" value="ECO:0007669"/>
    <property type="project" value="UniProtKB-UniRule"/>
</dbReference>
<dbReference type="GO" id="GO:0046961">
    <property type="term" value="F:proton-transporting ATPase activity, rotational mechanism"/>
    <property type="evidence" value="ECO:0007669"/>
    <property type="project" value="InterPro"/>
</dbReference>
<dbReference type="GO" id="GO:0042777">
    <property type="term" value="P:proton motive force-driven plasma membrane ATP synthesis"/>
    <property type="evidence" value="ECO:0007669"/>
    <property type="project" value="UniProtKB-UniRule"/>
</dbReference>
<dbReference type="CDD" id="cd18111">
    <property type="entry name" value="ATP-synt_V_A-type_alpha_C"/>
    <property type="match status" value="1"/>
</dbReference>
<dbReference type="CDD" id="cd18119">
    <property type="entry name" value="ATP-synt_V_A-type_alpha_N"/>
    <property type="match status" value="1"/>
</dbReference>
<dbReference type="CDD" id="cd01134">
    <property type="entry name" value="V_A-ATPase_A"/>
    <property type="match status" value="1"/>
</dbReference>
<dbReference type="FunFam" id="1.10.1140.10:FF:000002">
    <property type="entry name" value="V-type proton ATPase catalytic subunit A"/>
    <property type="match status" value="1"/>
</dbReference>
<dbReference type="FunFam" id="2.40.30.20:FF:000002">
    <property type="entry name" value="V-type proton ATPase catalytic subunit A"/>
    <property type="match status" value="1"/>
</dbReference>
<dbReference type="FunFam" id="2.40.50.100:FF:000008">
    <property type="entry name" value="V-type proton ATPase catalytic subunit A"/>
    <property type="match status" value="1"/>
</dbReference>
<dbReference type="Gene3D" id="2.40.30.20">
    <property type="match status" value="1"/>
</dbReference>
<dbReference type="Gene3D" id="2.40.50.100">
    <property type="match status" value="1"/>
</dbReference>
<dbReference type="Gene3D" id="1.10.1140.10">
    <property type="entry name" value="Bovine Mitochondrial F1-atpase, Atp Synthase Beta Chain, Chain D, domain 3"/>
    <property type="match status" value="1"/>
</dbReference>
<dbReference type="Gene3D" id="3.40.50.300">
    <property type="entry name" value="P-loop containing nucleotide triphosphate hydrolases"/>
    <property type="match status" value="1"/>
</dbReference>
<dbReference type="HAMAP" id="MF_00309">
    <property type="entry name" value="ATP_synth_A_arch"/>
    <property type="match status" value="1"/>
</dbReference>
<dbReference type="InterPro" id="IPR055190">
    <property type="entry name" value="ATP-synt_VA_C"/>
</dbReference>
<dbReference type="InterPro" id="IPR031686">
    <property type="entry name" value="ATP-synth_a_Xtn"/>
</dbReference>
<dbReference type="InterPro" id="IPR023366">
    <property type="entry name" value="ATP_synth_asu-like_sf"/>
</dbReference>
<dbReference type="InterPro" id="IPR005726">
    <property type="entry name" value="ATP_synth_asu_arc"/>
</dbReference>
<dbReference type="InterPro" id="IPR020003">
    <property type="entry name" value="ATPase_a/bsu_AS"/>
</dbReference>
<dbReference type="InterPro" id="IPR004100">
    <property type="entry name" value="ATPase_F1/V1/A1_a/bsu_N"/>
</dbReference>
<dbReference type="InterPro" id="IPR036121">
    <property type="entry name" value="ATPase_F1/V1/A1_a/bsu_N_sf"/>
</dbReference>
<dbReference type="InterPro" id="IPR000194">
    <property type="entry name" value="ATPase_F1/V1/A1_a/bsu_nucl-bd"/>
</dbReference>
<dbReference type="InterPro" id="IPR024034">
    <property type="entry name" value="ATPase_F1/V1_b/a_C"/>
</dbReference>
<dbReference type="InterPro" id="IPR027417">
    <property type="entry name" value="P-loop_NTPase"/>
</dbReference>
<dbReference type="InterPro" id="IPR022878">
    <property type="entry name" value="V-ATPase_asu"/>
</dbReference>
<dbReference type="NCBIfam" id="TIGR01043">
    <property type="entry name" value="ATP_syn_A_arch"/>
    <property type="match status" value="1"/>
</dbReference>
<dbReference type="NCBIfam" id="NF003220">
    <property type="entry name" value="PRK04192.1"/>
    <property type="match status" value="1"/>
</dbReference>
<dbReference type="PANTHER" id="PTHR43607:SF1">
    <property type="entry name" value="H(+)-TRANSPORTING TWO-SECTOR ATPASE"/>
    <property type="match status" value="1"/>
</dbReference>
<dbReference type="PANTHER" id="PTHR43607">
    <property type="entry name" value="V-TYPE PROTON ATPASE CATALYTIC SUBUNIT A"/>
    <property type="match status" value="1"/>
</dbReference>
<dbReference type="Pfam" id="PF00006">
    <property type="entry name" value="ATP-synt_ab"/>
    <property type="match status" value="1"/>
</dbReference>
<dbReference type="Pfam" id="PF02874">
    <property type="entry name" value="ATP-synt_ab_N"/>
    <property type="match status" value="1"/>
</dbReference>
<dbReference type="Pfam" id="PF16886">
    <property type="entry name" value="ATP-synt_ab_Xtn"/>
    <property type="match status" value="1"/>
</dbReference>
<dbReference type="Pfam" id="PF22919">
    <property type="entry name" value="ATP-synt_VA_C"/>
    <property type="match status" value="1"/>
</dbReference>
<dbReference type="SUPFAM" id="SSF47917">
    <property type="entry name" value="C-terminal domain of alpha and beta subunits of F1 ATP synthase"/>
    <property type="match status" value="1"/>
</dbReference>
<dbReference type="SUPFAM" id="SSF50615">
    <property type="entry name" value="N-terminal domain of alpha and beta subunits of F1 ATP synthase"/>
    <property type="match status" value="1"/>
</dbReference>
<dbReference type="SUPFAM" id="SSF52540">
    <property type="entry name" value="P-loop containing nucleoside triphosphate hydrolases"/>
    <property type="match status" value="1"/>
</dbReference>
<dbReference type="PROSITE" id="PS00152">
    <property type="entry name" value="ATPASE_ALPHA_BETA"/>
    <property type="match status" value="1"/>
</dbReference>
<accession>A4FXD4</accession>